<dbReference type="EC" id="6.1.1.23" evidence="1"/>
<dbReference type="EMBL" id="CP001130">
    <property type="protein sequence ID" value="ACG57154.1"/>
    <property type="molecule type" value="Genomic_DNA"/>
</dbReference>
<dbReference type="RefSeq" id="WP_012513510.1">
    <property type="nucleotide sequence ID" value="NC_011126.1"/>
</dbReference>
<dbReference type="SMR" id="B4U7P3"/>
<dbReference type="STRING" id="380749.HY04AAS1_0464"/>
<dbReference type="KEGG" id="hya:HY04AAS1_0464"/>
<dbReference type="eggNOG" id="COG0173">
    <property type="taxonomic scope" value="Bacteria"/>
</dbReference>
<dbReference type="HOGENOM" id="CLU_014330_3_2_0"/>
<dbReference type="OrthoDB" id="9802326at2"/>
<dbReference type="GO" id="GO:0005737">
    <property type="term" value="C:cytoplasm"/>
    <property type="evidence" value="ECO:0007669"/>
    <property type="project" value="UniProtKB-SubCell"/>
</dbReference>
<dbReference type="GO" id="GO:0004815">
    <property type="term" value="F:aspartate-tRNA ligase activity"/>
    <property type="evidence" value="ECO:0007669"/>
    <property type="project" value="UniProtKB-UniRule"/>
</dbReference>
<dbReference type="GO" id="GO:0050560">
    <property type="term" value="F:aspartate-tRNA(Asn) ligase activity"/>
    <property type="evidence" value="ECO:0007669"/>
    <property type="project" value="UniProtKB-EC"/>
</dbReference>
<dbReference type="GO" id="GO:0005524">
    <property type="term" value="F:ATP binding"/>
    <property type="evidence" value="ECO:0007669"/>
    <property type="project" value="UniProtKB-UniRule"/>
</dbReference>
<dbReference type="GO" id="GO:0003676">
    <property type="term" value="F:nucleic acid binding"/>
    <property type="evidence" value="ECO:0007669"/>
    <property type="project" value="InterPro"/>
</dbReference>
<dbReference type="GO" id="GO:0006422">
    <property type="term" value="P:aspartyl-tRNA aminoacylation"/>
    <property type="evidence" value="ECO:0007669"/>
    <property type="project" value="UniProtKB-UniRule"/>
</dbReference>
<dbReference type="CDD" id="cd00777">
    <property type="entry name" value="AspRS_core"/>
    <property type="match status" value="1"/>
</dbReference>
<dbReference type="CDD" id="cd04317">
    <property type="entry name" value="EcAspRS_like_N"/>
    <property type="match status" value="1"/>
</dbReference>
<dbReference type="Gene3D" id="3.30.930.10">
    <property type="entry name" value="Bira Bifunctional Protein, Domain 2"/>
    <property type="match status" value="1"/>
</dbReference>
<dbReference type="Gene3D" id="3.30.1360.30">
    <property type="entry name" value="GAD-like domain"/>
    <property type="match status" value="1"/>
</dbReference>
<dbReference type="Gene3D" id="2.40.50.140">
    <property type="entry name" value="Nucleic acid-binding proteins"/>
    <property type="match status" value="1"/>
</dbReference>
<dbReference type="HAMAP" id="MF_00044">
    <property type="entry name" value="Asp_tRNA_synth_type1"/>
    <property type="match status" value="1"/>
</dbReference>
<dbReference type="InterPro" id="IPR004364">
    <property type="entry name" value="Aa-tRNA-synt_II"/>
</dbReference>
<dbReference type="InterPro" id="IPR006195">
    <property type="entry name" value="aa-tRNA-synth_II"/>
</dbReference>
<dbReference type="InterPro" id="IPR045864">
    <property type="entry name" value="aa-tRNA-synth_II/BPL/LPL"/>
</dbReference>
<dbReference type="InterPro" id="IPR004524">
    <property type="entry name" value="Asp-tRNA-ligase_1"/>
</dbReference>
<dbReference type="InterPro" id="IPR047089">
    <property type="entry name" value="Asp-tRNA-ligase_1_N"/>
</dbReference>
<dbReference type="InterPro" id="IPR002312">
    <property type="entry name" value="Asp/Asn-tRNA-synth_IIb"/>
</dbReference>
<dbReference type="InterPro" id="IPR047090">
    <property type="entry name" value="AspRS_core"/>
</dbReference>
<dbReference type="InterPro" id="IPR004115">
    <property type="entry name" value="GAD-like_sf"/>
</dbReference>
<dbReference type="InterPro" id="IPR029351">
    <property type="entry name" value="GAD_dom"/>
</dbReference>
<dbReference type="InterPro" id="IPR012340">
    <property type="entry name" value="NA-bd_OB-fold"/>
</dbReference>
<dbReference type="InterPro" id="IPR004365">
    <property type="entry name" value="NA-bd_OB_tRNA"/>
</dbReference>
<dbReference type="NCBIfam" id="TIGR00459">
    <property type="entry name" value="aspS_bact"/>
    <property type="match status" value="1"/>
</dbReference>
<dbReference type="NCBIfam" id="NF001750">
    <property type="entry name" value="PRK00476.1"/>
    <property type="match status" value="1"/>
</dbReference>
<dbReference type="PANTHER" id="PTHR22594:SF5">
    <property type="entry name" value="ASPARTATE--TRNA LIGASE, MITOCHONDRIAL"/>
    <property type="match status" value="1"/>
</dbReference>
<dbReference type="PANTHER" id="PTHR22594">
    <property type="entry name" value="ASPARTYL/LYSYL-TRNA SYNTHETASE"/>
    <property type="match status" value="1"/>
</dbReference>
<dbReference type="Pfam" id="PF02938">
    <property type="entry name" value="GAD"/>
    <property type="match status" value="1"/>
</dbReference>
<dbReference type="Pfam" id="PF00152">
    <property type="entry name" value="tRNA-synt_2"/>
    <property type="match status" value="1"/>
</dbReference>
<dbReference type="Pfam" id="PF01336">
    <property type="entry name" value="tRNA_anti-codon"/>
    <property type="match status" value="1"/>
</dbReference>
<dbReference type="PRINTS" id="PR01042">
    <property type="entry name" value="TRNASYNTHASP"/>
</dbReference>
<dbReference type="SUPFAM" id="SSF55681">
    <property type="entry name" value="Class II aaRS and biotin synthetases"/>
    <property type="match status" value="1"/>
</dbReference>
<dbReference type="SUPFAM" id="SSF55261">
    <property type="entry name" value="GAD domain-like"/>
    <property type="match status" value="1"/>
</dbReference>
<dbReference type="SUPFAM" id="SSF50249">
    <property type="entry name" value="Nucleic acid-binding proteins"/>
    <property type="match status" value="1"/>
</dbReference>
<dbReference type="PROSITE" id="PS50862">
    <property type="entry name" value="AA_TRNA_LIGASE_II"/>
    <property type="match status" value="1"/>
</dbReference>
<keyword id="KW-0030">Aminoacyl-tRNA synthetase</keyword>
<keyword id="KW-0067">ATP-binding</keyword>
<keyword id="KW-0963">Cytoplasm</keyword>
<keyword id="KW-0436">Ligase</keyword>
<keyword id="KW-0547">Nucleotide-binding</keyword>
<keyword id="KW-0648">Protein biosynthesis</keyword>
<accession>B4U7P3</accession>
<sequence length="594" mass="68135">MLRDTYIGLVDDSFIGKHVKLAGWIDSIRDHGGVLFIDLRDKEGKLQAVLEESGNKELYDIAKHFKEESVVLVEGLVRRRPSGTENPKIKSGNVELLIERIELLNASETLPFPIDDNVDISEELRLKYRYLDLRRPKFQKAIKTRSKALKITRDFFEENGFYEIETPFLIKSTPEGARDFLVPSRLHPGKFYALPQSPQLFKQILMISGFDRYFQIARCFRDEDLRSDRQPEFTQIDFEMSFVEEQDIMEISEKLLSKLFLELLDIELSTPFKRITYKEAMERYGSDKPDTRFGLELVDLSDIFKNTNFNVFKSAIEQKGIIKAIKINKILSRKEIDNLTEYVKGLGAKGLAWGKIENGEFSSPIAKFLTEEEIKAMLSRLEAKDQDMIFFSADKPKNVYKILGNLRLQLGKMLNLIDESKFAFLWVVDFPMFEYNEEEGRLEAMHHPFTSPKTEDLDKIKYIVDKSDKEDIINIGENIGARAYDIVLNGVEIGGGSIRIHKQDIQKLVFKILNITDEEAAMKFGFLLEALKYGAPPHGGLAFGFDRLMAMMLGFDSIRDVIAFPKTQKGTCLLTGAPDVVSDKQLKELHIKIT</sequence>
<name>SYDND_HYDS0</name>
<gene>
    <name evidence="1" type="primary">aspS</name>
    <name type="ordered locus">HY04AAS1_0464</name>
</gene>
<evidence type="ECO:0000255" key="1">
    <source>
        <dbReference type="HAMAP-Rule" id="MF_00044"/>
    </source>
</evidence>
<reference key="1">
    <citation type="journal article" date="2009" name="J. Bacteriol.">
        <title>Complete and draft genome sequences of six members of the Aquificales.</title>
        <authorList>
            <person name="Reysenbach A.-L."/>
            <person name="Hamamura N."/>
            <person name="Podar M."/>
            <person name="Griffiths E."/>
            <person name="Ferreira S."/>
            <person name="Hochstein R."/>
            <person name="Heidelberg J."/>
            <person name="Johnson J."/>
            <person name="Mead D."/>
            <person name="Pohorille A."/>
            <person name="Sarmiento M."/>
            <person name="Schweighofer K."/>
            <person name="Seshadri R."/>
            <person name="Voytek M.A."/>
        </authorList>
    </citation>
    <scope>NUCLEOTIDE SEQUENCE [LARGE SCALE GENOMIC DNA]</scope>
    <source>
        <strain>Y04AAS1</strain>
    </source>
</reference>
<comment type="function">
    <text evidence="1">Aspartyl-tRNA synthetase with relaxed tRNA specificity since it is able to aspartylate not only its cognate tRNA(Asp) but also tRNA(Asn). Reaction proceeds in two steps: L-aspartate is first activated by ATP to form Asp-AMP and then transferred to the acceptor end of tRNA(Asp/Asn).</text>
</comment>
<comment type="catalytic activity">
    <reaction evidence="1">
        <text>tRNA(Asx) + L-aspartate + ATP = L-aspartyl-tRNA(Asx) + AMP + diphosphate</text>
        <dbReference type="Rhea" id="RHEA:18349"/>
        <dbReference type="Rhea" id="RHEA-COMP:9710"/>
        <dbReference type="Rhea" id="RHEA-COMP:9711"/>
        <dbReference type="ChEBI" id="CHEBI:29991"/>
        <dbReference type="ChEBI" id="CHEBI:30616"/>
        <dbReference type="ChEBI" id="CHEBI:33019"/>
        <dbReference type="ChEBI" id="CHEBI:78442"/>
        <dbReference type="ChEBI" id="CHEBI:78516"/>
        <dbReference type="ChEBI" id="CHEBI:456215"/>
        <dbReference type="EC" id="6.1.1.23"/>
    </reaction>
</comment>
<comment type="subunit">
    <text evidence="1">Homodimer.</text>
</comment>
<comment type="subcellular location">
    <subcellularLocation>
        <location evidence="1">Cytoplasm</location>
    </subcellularLocation>
</comment>
<comment type="similarity">
    <text evidence="1">Belongs to the class-II aminoacyl-tRNA synthetase family. Type 1 subfamily.</text>
</comment>
<organism>
    <name type="scientific">Hydrogenobaculum sp. (strain Y04AAS1)</name>
    <dbReference type="NCBI Taxonomy" id="380749"/>
    <lineage>
        <taxon>Bacteria</taxon>
        <taxon>Pseudomonadati</taxon>
        <taxon>Aquificota</taxon>
        <taxon>Aquificia</taxon>
        <taxon>Aquificales</taxon>
        <taxon>Aquificaceae</taxon>
        <taxon>Hydrogenobaculum</taxon>
    </lineage>
</organism>
<proteinExistence type="inferred from homology"/>
<protein>
    <recommendedName>
        <fullName evidence="1">Aspartate--tRNA(Asp/Asn) ligase</fullName>
        <ecNumber evidence="1">6.1.1.23</ecNumber>
    </recommendedName>
    <alternativeName>
        <fullName evidence="1">Aspartyl-tRNA synthetase</fullName>
        <shortName evidence="1">AspRS</shortName>
    </alternativeName>
    <alternativeName>
        <fullName evidence="1">Non-discriminating aspartyl-tRNA synthetase</fullName>
        <shortName evidence="1">ND-AspRS</shortName>
    </alternativeName>
</protein>
<feature type="chain" id="PRO_1000091002" description="Aspartate--tRNA(Asp/Asn) ligase">
    <location>
        <begin position="1"/>
        <end position="594"/>
    </location>
</feature>
<feature type="region of interest" description="Aspartate" evidence="1">
    <location>
        <begin position="199"/>
        <end position="202"/>
    </location>
</feature>
<feature type="binding site" evidence="1">
    <location>
        <position position="175"/>
    </location>
    <ligand>
        <name>L-aspartate</name>
        <dbReference type="ChEBI" id="CHEBI:29991"/>
    </ligand>
</feature>
<feature type="binding site" evidence="1">
    <location>
        <begin position="221"/>
        <end position="223"/>
    </location>
    <ligand>
        <name>ATP</name>
        <dbReference type="ChEBI" id="CHEBI:30616"/>
    </ligand>
</feature>
<feature type="binding site" evidence="1">
    <location>
        <position position="221"/>
    </location>
    <ligand>
        <name>L-aspartate</name>
        <dbReference type="ChEBI" id="CHEBI:29991"/>
    </ligand>
</feature>
<feature type="binding site" evidence="1">
    <location>
        <position position="230"/>
    </location>
    <ligand>
        <name>ATP</name>
        <dbReference type="ChEBI" id="CHEBI:30616"/>
    </ligand>
</feature>
<feature type="binding site" evidence="1">
    <location>
        <position position="446"/>
    </location>
    <ligand>
        <name>L-aspartate</name>
        <dbReference type="ChEBI" id="CHEBI:29991"/>
    </ligand>
</feature>
<feature type="binding site" evidence="1">
    <location>
        <position position="492"/>
    </location>
    <ligand>
        <name>ATP</name>
        <dbReference type="ChEBI" id="CHEBI:30616"/>
    </ligand>
</feature>
<feature type="binding site" evidence="1">
    <location>
        <position position="499"/>
    </location>
    <ligand>
        <name>L-aspartate</name>
        <dbReference type="ChEBI" id="CHEBI:29991"/>
    </ligand>
</feature>
<feature type="binding site" evidence="1">
    <location>
        <begin position="544"/>
        <end position="547"/>
    </location>
    <ligand>
        <name>ATP</name>
        <dbReference type="ChEBI" id="CHEBI:30616"/>
    </ligand>
</feature>
<feature type="site" description="Important for tRNA non-discrimination" evidence="1">
    <location>
        <position position="31"/>
    </location>
</feature>
<feature type="site" description="Important for tRNA non-discrimination" evidence="1">
    <location>
        <position position="83"/>
    </location>
</feature>